<keyword id="KW-0963">Cytoplasm</keyword>
<keyword id="KW-0378">Hydrolase</keyword>
<keyword id="KW-0540">Nuclease</keyword>
<keyword id="KW-0690">Ribosome biogenesis</keyword>
<dbReference type="EC" id="3.1.-.-" evidence="1"/>
<dbReference type="EMBL" id="CP001108">
    <property type="protein sequence ID" value="ACF47164.1"/>
    <property type="molecule type" value="Genomic_DNA"/>
</dbReference>
<dbReference type="RefSeq" id="WP_012506695.1">
    <property type="nucleotide sequence ID" value="NC_011059.1"/>
</dbReference>
<dbReference type="SMR" id="B4S5W7"/>
<dbReference type="STRING" id="290512.Paes_2162"/>
<dbReference type="KEGG" id="paa:Paes_2162"/>
<dbReference type="eggNOG" id="COG0816">
    <property type="taxonomic scope" value="Bacteria"/>
</dbReference>
<dbReference type="HOGENOM" id="CLU_098240_2_1_10"/>
<dbReference type="Proteomes" id="UP000002725">
    <property type="component" value="Chromosome"/>
</dbReference>
<dbReference type="GO" id="GO:0005829">
    <property type="term" value="C:cytosol"/>
    <property type="evidence" value="ECO:0007669"/>
    <property type="project" value="TreeGrafter"/>
</dbReference>
<dbReference type="GO" id="GO:0004518">
    <property type="term" value="F:nuclease activity"/>
    <property type="evidence" value="ECO:0007669"/>
    <property type="project" value="UniProtKB-KW"/>
</dbReference>
<dbReference type="GO" id="GO:0000967">
    <property type="term" value="P:rRNA 5'-end processing"/>
    <property type="evidence" value="ECO:0007669"/>
    <property type="project" value="UniProtKB-UniRule"/>
</dbReference>
<dbReference type="CDD" id="cd16964">
    <property type="entry name" value="YqgF"/>
    <property type="match status" value="1"/>
</dbReference>
<dbReference type="Gene3D" id="3.30.420.140">
    <property type="entry name" value="YqgF/RNase H-like domain"/>
    <property type="match status" value="1"/>
</dbReference>
<dbReference type="HAMAP" id="MF_00651">
    <property type="entry name" value="Nuclease_YqgF"/>
    <property type="match status" value="1"/>
</dbReference>
<dbReference type="InterPro" id="IPR012337">
    <property type="entry name" value="RNaseH-like_sf"/>
</dbReference>
<dbReference type="InterPro" id="IPR005227">
    <property type="entry name" value="YqgF"/>
</dbReference>
<dbReference type="InterPro" id="IPR006641">
    <property type="entry name" value="YqgF/RNaseH-like_dom"/>
</dbReference>
<dbReference type="InterPro" id="IPR037027">
    <property type="entry name" value="YqgF/RNaseH-like_dom_sf"/>
</dbReference>
<dbReference type="NCBIfam" id="TIGR00250">
    <property type="entry name" value="RNAse_H_YqgF"/>
    <property type="match status" value="1"/>
</dbReference>
<dbReference type="PANTHER" id="PTHR33317">
    <property type="entry name" value="POLYNUCLEOTIDYL TRANSFERASE, RIBONUCLEASE H-LIKE SUPERFAMILY PROTEIN"/>
    <property type="match status" value="1"/>
</dbReference>
<dbReference type="PANTHER" id="PTHR33317:SF4">
    <property type="entry name" value="POLYNUCLEOTIDYL TRANSFERASE, RIBONUCLEASE H-LIKE SUPERFAMILY PROTEIN"/>
    <property type="match status" value="1"/>
</dbReference>
<dbReference type="Pfam" id="PF03652">
    <property type="entry name" value="RuvX"/>
    <property type="match status" value="1"/>
</dbReference>
<dbReference type="SMART" id="SM00732">
    <property type="entry name" value="YqgFc"/>
    <property type="match status" value="1"/>
</dbReference>
<dbReference type="SUPFAM" id="SSF53098">
    <property type="entry name" value="Ribonuclease H-like"/>
    <property type="match status" value="1"/>
</dbReference>
<proteinExistence type="inferred from homology"/>
<comment type="function">
    <text evidence="1">Could be a nuclease involved in processing of the 5'-end of pre-16S rRNA.</text>
</comment>
<comment type="subcellular location">
    <subcellularLocation>
        <location evidence="1">Cytoplasm</location>
    </subcellularLocation>
</comment>
<comment type="similarity">
    <text evidence="1">Belongs to the YqgF nuclease family.</text>
</comment>
<gene>
    <name type="ordered locus">Paes_2162</name>
</gene>
<sequence>MTKENRKRIIAVDYGTKRIGLAKTDPLQLFAQPVGTFSEEALFRAIKEISGLDGIGRILIGYPLNADGSHNRMTDIVDAFAARVHNEFPDIPLELVNEHGSSRSAGQILINSGLSRKKRHEKGRLDSASACVLLQAHLDKSH</sequence>
<reference key="1">
    <citation type="submission" date="2008-06" db="EMBL/GenBank/DDBJ databases">
        <title>Complete sequence of chromosome of Prosthecochloris aestuarii DSM 271.</title>
        <authorList>
            <consortium name="US DOE Joint Genome Institute"/>
            <person name="Lucas S."/>
            <person name="Copeland A."/>
            <person name="Lapidus A."/>
            <person name="Glavina del Rio T."/>
            <person name="Dalin E."/>
            <person name="Tice H."/>
            <person name="Bruce D."/>
            <person name="Goodwin L."/>
            <person name="Pitluck S."/>
            <person name="Schmutz J."/>
            <person name="Larimer F."/>
            <person name="Land M."/>
            <person name="Hauser L."/>
            <person name="Kyrpides N."/>
            <person name="Anderson I."/>
            <person name="Liu Z."/>
            <person name="Li T."/>
            <person name="Zhao F."/>
            <person name="Overmann J."/>
            <person name="Bryant D.A."/>
            <person name="Richardson P."/>
        </authorList>
    </citation>
    <scope>NUCLEOTIDE SEQUENCE [LARGE SCALE GENOMIC DNA]</scope>
    <source>
        <strain>DSM 271 / SK 413</strain>
    </source>
</reference>
<accession>B4S5W7</accession>
<evidence type="ECO:0000255" key="1">
    <source>
        <dbReference type="HAMAP-Rule" id="MF_00651"/>
    </source>
</evidence>
<organism>
    <name type="scientific">Prosthecochloris aestuarii (strain DSM 271 / SK 413)</name>
    <dbReference type="NCBI Taxonomy" id="290512"/>
    <lineage>
        <taxon>Bacteria</taxon>
        <taxon>Pseudomonadati</taxon>
        <taxon>Chlorobiota</taxon>
        <taxon>Chlorobiia</taxon>
        <taxon>Chlorobiales</taxon>
        <taxon>Chlorobiaceae</taxon>
        <taxon>Prosthecochloris</taxon>
    </lineage>
</organism>
<name>YQGF_PROA2</name>
<feature type="chain" id="PRO_1000131056" description="Putative pre-16S rRNA nuclease">
    <location>
        <begin position="1"/>
        <end position="142"/>
    </location>
</feature>
<protein>
    <recommendedName>
        <fullName evidence="1">Putative pre-16S rRNA nuclease</fullName>
        <ecNumber evidence="1">3.1.-.-</ecNumber>
    </recommendedName>
</protein>